<organism>
    <name type="scientific">Salmonella choleraesuis (strain SC-B67)</name>
    <dbReference type="NCBI Taxonomy" id="321314"/>
    <lineage>
        <taxon>Bacteria</taxon>
        <taxon>Pseudomonadati</taxon>
        <taxon>Pseudomonadota</taxon>
        <taxon>Gammaproteobacteria</taxon>
        <taxon>Enterobacterales</taxon>
        <taxon>Enterobacteriaceae</taxon>
        <taxon>Salmonella</taxon>
    </lineage>
</organism>
<comment type="function">
    <text evidence="1">Catalyzes the isomerization of 5-dehydro-4-deoxy-D-glucuronate to 3-deoxy-D-glycero-2,5-hexodiulosonate.</text>
</comment>
<comment type="catalytic activity">
    <reaction evidence="1">
        <text>5-dehydro-4-deoxy-D-glucuronate = 3-deoxy-D-glycero-2,5-hexodiulosonate</text>
        <dbReference type="Rhea" id="RHEA:23896"/>
        <dbReference type="ChEBI" id="CHEBI:17117"/>
        <dbReference type="ChEBI" id="CHEBI:29071"/>
        <dbReference type="EC" id="5.3.1.17"/>
    </reaction>
</comment>
<comment type="cofactor">
    <cofactor evidence="1">
        <name>Zn(2+)</name>
        <dbReference type="ChEBI" id="CHEBI:29105"/>
    </cofactor>
    <text evidence="1">Binds 1 zinc ion per subunit.</text>
</comment>
<comment type="pathway">
    <text evidence="1">Glycan metabolism; pectin degradation; 2-dehydro-3-deoxy-D-gluconate from pectin: step 4/5.</text>
</comment>
<comment type="similarity">
    <text evidence="1">Belongs to the KduI family.</text>
</comment>
<feature type="chain" id="PRO_1000045088" description="4-deoxy-L-threo-5-hexosulose-uronate ketol-isomerase">
    <location>
        <begin position="1"/>
        <end position="278"/>
    </location>
</feature>
<feature type="binding site" evidence="1">
    <location>
        <position position="196"/>
    </location>
    <ligand>
        <name>Zn(2+)</name>
        <dbReference type="ChEBI" id="CHEBI:29105"/>
    </ligand>
</feature>
<feature type="binding site" evidence="1">
    <location>
        <position position="198"/>
    </location>
    <ligand>
        <name>Zn(2+)</name>
        <dbReference type="ChEBI" id="CHEBI:29105"/>
    </ligand>
</feature>
<feature type="binding site" evidence="1">
    <location>
        <position position="203"/>
    </location>
    <ligand>
        <name>Zn(2+)</name>
        <dbReference type="ChEBI" id="CHEBI:29105"/>
    </ligand>
</feature>
<feature type="binding site" evidence="1">
    <location>
        <position position="245"/>
    </location>
    <ligand>
        <name>Zn(2+)</name>
        <dbReference type="ChEBI" id="CHEBI:29105"/>
    </ligand>
</feature>
<dbReference type="EC" id="5.3.1.17" evidence="1"/>
<dbReference type="EMBL" id="AE017220">
    <property type="protein sequence ID" value="AAX66863.1"/>
    <property type="molecule type" value="Genomic_DNA"/>
</dbReference>
<dbReference type="RefSeq" id="WP_000383262.1">
    <property type="nucleotide sequence ID" value="NC_006905.1"/>
</dbReference>
<dbReference type="SMR" id="Q57K99"/>
<dbReference type="KEGG" id="sec:SCH_2957"/>
<dbReference type="HOGENOM" id="CLU_062609_0_0_6"/>
<dbReference type="UniPathway" id="UPA00545">
    <property type="reaction ID" value="UER00826"/>
</dbReference>
<dbReference type="Proteomes" id="UP000000538">
    <property type="component" value="Chromosome"/>
</dbReference>
<dbReference type="GO" id="GO:0008697">
    <property type="term" value="F:4-deoxy-L-threo-5-hexosulose-uronate ketol-isomerase activity"/>
    <property type="evidence" value="ECO:0007669"/>
    <property type="project" value="UniProtKB-UniRule"/>
</dbReference>
<dbReference type="GO" id="GO:0008270">
    <property type="term" value="F:zinc ion binding"/>
    <property type="evidence" value="ECO:0007669"/>
    <property type="project" value="UniProtKB-UniRule"/>
</dbReference>
<dbReference type="GO" id="GO:0019698">
    <property type="term" value="P:D-galacturonate catabolic process"/>
    <property type="evidence" value="ECO:0007669"/>
    <property type="project" value="TreeGrafter"/>
</dbReference>
<dbReference type="GO" id="GO:0042840">
    <property type="term" value="P:D-glucuronate catabolic process"/>
    <property type="evidence" value="ECO:0007669"/>
    <property type="project" value="TreeGrafter"/>
</dbReference>
<dbReference type="GO" id="GO:0045490">
    <property type="term" value="P:pectin catabolic process"/>
    <property type="evidence" value="ECO:0007669"/>
    <property type="project" value="UniProtKB-UniRule"/>
</dbReference>
<dbReference type="CDD" id="cd20491">
    <property type="entry name" value="cupin_KduI_C"/>
    <property type="match status" value="1"/>
</dbReference>
<dbReference type="CDD" id="cd20294">
    <property type="entry name" value="cupin_KduI_N"/>
    <property type="match status" value="1"/>
</dbReference>
<dbReference type="FunFam" id="2.60.120.10:FF:000018">
    <property type="entry name" value="4-deoxy-L-threo-5-hexosulose-uronate ketol-isomerase"/>
    <property type="match status" value="1"/>
</dbReference>
<dbReference type="FunFam" id="2.60.120.520:FF:000001">
    <property type="entry name" value="4-deoxy-L-threo-5-hexosulose-uronate ketol-isomerase"/>
    <property type="match status" value="1"/>
</dbReference>
<dbReference type="Gene3D" id="2.60.120.10">
    <property type="entry name" value="Jelly Rolls"/>
    <property type="match status" value="1"/>
</dbReference>
<dbReference type="Gene3D" id="2.60.120.520">
    <property type="entry name" value="pectin degrading enzyme 5-keto 4- deoxyuronate isomerase, domain 1"/>
    <property type="match status" value="1"/>
</dbReference>
<dbReference type="HAMAP" id="MF_00687">
    <property type="entry name" value="KduI"/>
    <property type="match status" value="1"/>
</dbReference>
<dbReference type="InterPro" id="IPR007045">
    <property type="entry name" value="KduI"/>
</dbReference>
<dbReference type="InterPro" id="IPR021120">
    <property type="entry name" value="KduI/IolB_isomerase"/>
</dbReference>
<dbReference type="InterPro" id="IPR027449">
    <property type="entry name" value="KduI_N"/>
</dbReference>
<dbReference type="InterPro" id="IPR014710">
    <property type="entry name" value="RmlC-like_jellyroll"/>
</dbReference>
<dbReference type="InterPro" id="IPR011051">
    <property type="entry name" value="RmlC_Cupin_sf"/>
</dbReference>
<dbReference type="NCBIfam" id="NF002091">
    <property type="entry name" value="PRK00924.1"/>
    <property type="match status" value="1"/>
</dbReference>
<dbReference type="PANTHER" id="PTHR38461">
    <property type="entry name" value="4-DEOXY-L-THREO-5-HEXOSULOSE-URONATE KETOL-ISOMERASE"/>
    <property type="match status" value="1"/>
</dbReference>
<dbReference type="PANTHER" id="PTHR38461:SF1">
    <property type="entry name" value="4-DEOXY-L-THREO-5-HEXOSULOSE-URONATE KETOL-ISOMERASE"/>
    <property type="match status" value="1"/>
</dbReference>
<dbReference type="Pfam" id="PF04962">
    <property type="entry name" value="KduI"/>
    <property type="match status" value="1"/>
</dbReference>
<dbReference type="PIRSF" id="PIRSF006625">
    <property type="entry name" value="KduI"/>
    <property type="match status" value="1"/>
</dbReference>
<dbReference type="SUPFAM" id="SSF51182">
    <property type="entry name" value="RmlC-like cupins"/>
    <property type="match status" value="1"/>
</dbReference>
<sequence length="278" mass="31253">MDVRQSIHSEHAKTLDTQALRREFLIENIFVADEYTMFYSHIDRIIVGGIMPVSHSVEIGGEVGKQLGVSRLLDRRELGVINIGGAGAIIVDGQRHDIGHRDALYIGKGAKELVFVSNEASRPAKFYYNCAPAHTAYPTKKVSPADVAPVTLGDNLTSNRRTINKYFVPDVLETCQLSMGLTELAPGNLWNTMPCHTHERRMEVYLYFNMEEDSCVFHMMGQPQETRHIVMRNEQAVISPSWSIHSGVGTKAYTFIWGMVGENQVFDDMDHVAVQDLR</sequence>
<keyword id="KW-0413">Isomerase</keyword>
<keyword id="KW-0479">Metal-binding</keyword>
<keyword id="KW-0862">Zinc</keyword>
<gene>
    <name evidence="1" type="primary">kduI</name>
    <name type="ordered locus">SCH_2957</name>
</gene>
<reference key="1">
    <citation type="journal article" date="2005" name="Nucleic Acids Res.">
        <title>The genome sequence of Salmonella enterica serovar Choleraesuis, a highly invasive and resistant zoonotic pathogen.</title>
        <authorList>
            <person name="Chiu C.-H."/>
            <person name="Tang P."/>
            <person name="Chu C."/>
            <person name="Hu S."/>
            <person name="Bao Q."/>
            <person name="Yu J."/>
            <person name="Chou Y.-Y."/>
            <person name="Wang H.-S."/>
            <person name="Lee Y.-S."/>
        </authorList>
    </citation>
    <scope>NUCLEOTIDE SEQUENCE [LARGE SCALE GENOMIC DNA]</scope>
    <source>
        <strain>SC-B67</strain>
    </source>
</reference>
<protein>
    <recommendedName>
        <fullName evidence="1">4-deoxy-L-threo-5-hexosulose-uronate ketol-isomerase</fullName>
        <ecNumber evidence="1">5.3.1.17</ecNumber>
    </recommendedName>
    <alternativeName>
        <fullName evidence="1">5-keto-4-deoxyuronate isomerase</fullName>
    </alternativeName>
    <alternativeName>
        <fullName evidence="1">DKI isomerase</fullName>
    </alternativeName>
</protein>
<proteinExistence type="inferred from homology"/>
<name>KDUI_SALCH</name>
<accession>Q57K99</accession>
<evidence type="ECO:0000255" key="1">
    <source>
        <dbReference type="HAMAP-Rule" id="MF_00687"/>
    </source>
</evidence>